<keyword id="KW-0963">Cytoplasm</keyword>
<keyword id="KW-0378">Hydrolase</keyword>
<keyword id="KW-0645">Protease</keyword>
<keyword id="KW-0720">Serine protease</keyword>
<feature type="chain" id="PRO_1000080893" description="ATP-dependent Clp protease proteolytic subunit">
    <location>
        <begin position="1"/>
        <end position="193"/>
    </location>
</feature>
<feature type="active site" description="Nucleophile" evidence="1">
    <location>
        <position position="98"/>
    </location>
</feature>
<feature type="active site" evidence="1">
    <location>
        <position position="123"/>
    </location>
</feature>
<gene>
    <name evidence="1" type="primary">clpP</name>
    <name type="ordered locus">HSM_0215</name>
</gene>
<comment type="function">
    <text evidence="1">Cleaves peptides in various proteins in a process that requires ATP hydrolysis. Has a chymotrypsin-like activity. Plays a major role in the degradation of misfolded proteins.</text>
</comment>
<comment type="catalytic activity">
    <reaction evidence="1">
        <text>Hydrolysis of proteins to small peptides in the presence of ATP and magnesium. alpha-casein is the usual test substrate. In the absence of ATP, only oligopeptides shorter than five residues are hydrolyzed (such as succinyl-Leu-Tyr-|-NHMec, and Leu-Tyr-Leu-|-Tyr-Trp, in which cleavage of the -Tyr-|-Leu- and -Tyr-|-Trp bonds also occurs).</text>
        <dbReference type="EC" id="3.4.21.92"/>
    </reaction>
</comment>
<comment type="subunit">
    <text evidence="1">Fourteen ClpP subunits assemble into 2 heptameric rings which stack back to back to give a disk-like structure with a central cavity, resembling the structure of eukaryotic proteasomes.</text>
</comment>
<comment type="subcellular location">
    <subcellularLocation>
        <location evidence="1">Cytoplasm</location>
    </subcellularLocation>
</comment>
<comment type="similarity">
    <text evidence="1">Belongs to the peptidase S14 family.</text>
</comment>
<evidence type="ECO:0000255" key="1">
    <source>
        <dbReference type="HAMAP-Rule" id="MF_00444"/>
    </source>
</evidence>
<protein>
    <recommendedName>
        <fullName evidence="1">ATP-dependent Clp protease proteolytic subunit</fullName>
        <ecNumber evidence="1">3.4.21.92</ecNumber>
    </recommendedName>
    <alternativeName>
        <fullName evidence="1">Endopeptidase Clp</fullName>
    </alternativeName>
</protein>
<name>CLPP_HISS2</name>
<dbReference type="EC" id="3.4.21.92" evidence="1"/>
<dbReference type="EMBL" id="CP000947">
    <property type="protein sequence ID" value="ACA31838.1"/>
    <property type="molecule type" value="Genomic_DNA"/>
</dbReference>
<dbReference type="RefSeq" id="WP_012341086.1">
    <property type="nucleotide sequence ID" value="NC_010519.1"/>
</dbReference>
<dbReference type="SMR" id="B0UW20"/>
<dbReference type="STRING" id="228400.HSM_0215"/>
<dbReference type="MEROPS" id="S14.001"/>
<dbReference type="GeneID" id="31486494"/>
<dbReference type="KEGG" id="hsm:HSM_0215"/>
<dbReference type="HOGENOM" id="CLU_058707_3_2_6"/>
<dbReference type="GO" id="GO:0005737">
    <property type="term" value="C:cytoplasm"/>
    <property type="evidence" value="ECO:0007669"/>
    <property type="project" value="UniProtKB-SubCell"/>
</dbReference>
<dbReference type="GO" id="GO:0009368">
    <property type="term" value="C:endopeptidase Clp complex"/>
    <property type="evidence" value="ECO:0007669"/>
    <property type="project" value="TreeGrafter"/>
</dbReference>
<dbReference type="GO" id="GO:0004176">
    <property type="term" value="F:ATP-dependent peptidase activity"/>
    <property type="evidence" value="ECO:0007669"/>
    <property type="project" value="InterPro"/>
</dbReference>
<dbReference type="GO" id="GO:0051117">
    <property type="term" value="F:ATPase binding"/>
    <property type="evidence" value="ECO:0007669"/>
    <property type="project" value="TreeGrafter"/>
</dbReference>
<dbReference type="GO" id="GO:0004252">
    <property type="term" value="F:serine-type endopeptidase activity"/>
    <property type="evidence" value="ECO:0007669"/>
    <property type="project" value="UniProtKB-UniRule"/>
</dbReference>
<dbReference type="GO" id="GO:0006515">
    <property type="term" value="P:protein quality control for misfolded or incompletely synthesized proteins"/>
    <property type="evidence" value="ECO:0007669"/>
    <property type="project" value="TreeGrafter"/>
</dbReference>
<dbReference type="CDD" id="cd07017">
    <property type="entry name" value="S14_ClpP_2"/>
    <property type="match status" value="1"/>
</dbReference>
<dbReference type="FunFam" id="3.90.226.10:FF:000001">
    <property type="entry name" value="ATP-dependent Clp protease proteolytic subunit"/>
    <property type="match status" value="1"/>
</dbReference>
<dbReference type="Gene3D" id="3.90.226.10">
    <property type="entry name" value="2-enoyl-CoA Hydratase, Chain A, domain 1"/>
    <property type="match status" value="1"/>
</dbReference>
<dbReference type="HAMAP" id="MF_00444">
    <property type="entry name" value="ClpP"/>
    <property type="match status" value="1"/>
</dbReference>
<dbReference type="InterPro" id="IPR001907">
    <property type="entry name" value="ClpP"/>
</dbReference>
<dbReference type="InterPro" id="IPR029045">
    <property type="entry name" value="ClpP/crotonase-like_dom_sf"/>
</dbReference>
<dbReference type="InterPro" id="IPR023562">
    <property type="entry name" value="ClpP/TepA"/>
</dbReference>
<dbReference type="InterPro" id="IPR033135">
    <property type="entry name" value="ClpP_His_AS"/>
</dbReference>
<dbReference type="InterPro" id="IPR018215">
    <property type="entry name" value="ClpP_Ser_AS"/>
</dbReference>
<dbReference type="NCBIfam" id="TIGR00493">
    <property type="entry name" value="clpP"/>
    <property type="match status" value="1"/>
</dbReference>
<dbReference type="NCBIfam" id="NF001368">
    <property type="entry name" value="PRK00277.1"/>
    <property type="match status" value="1"/>
</dbReference>
<dbReference type="NCBIfam" id="NF009205">
    <property type="entry name" value="PRK12553.1"/>
    <property type="match status" value="1"/>
</dbReference>
<dbReference type="PANTHER" id="PTHR10381">
    <property type="entry name" value="ATP-DEPENDENT CLP PROTEASE PROTEOLYTIC SUBUNIT"/>
    <property type="match status" value="1"/>
</dbReference>
<dbReference type="PANTHER" id="PTHR10381:SF70">
    <property type="entry name" value="ATP-DEPENDENT CLP PROTEASE PROTEOLYTIC SUBUNIT"/>
    <property type="match status" value="1"/>
</dbReference>
<dbReference type="Pfam" id="PF00574">
    <property type="entry name" value="CLP_protease"/>
    <property type="match status" value="1"/>
</dbReference>
<dbReference type="PRINTS" id="PR00127">
    <property type="entry name" value="CLPPROTEASEP"/>
</dbReference>
<dbReference type="SUPFAM" id="SSF52096">
    <property type="entry name" value="ClpP/crotonase"/>
    <property type="match status" value="1"/>
</dbReference>
<dbReference type="PROSITE" id="PS00382">
    <property type="entry name" value="CLP_PROTEASE_HIS"/>
    <property type="match status" value="1"/>
</dbReference>
<dbReference type="PROSITE" id="PS00381">
    <property type="entry name" value="CLP_PROTEASE_SER"/>
    <property type="match status" value="1"/>
</dbReference>
<reference key="1">
    <citation type="submission" date="2008-02" db="EMBL/GenBank/DDBJ databases">
        <title>Complete sequence of Haemophilus somnus 2336.</title>
        <authorList>
            <consortium name="US DOE Joint Genome Institute"/>
            <person name="Siddaramappa S."/>
            <person name="Duncan A.J."/>
            <person name="Challacombe J.F."/>
            <person name="Rainey D."/>
            <person name="Gillaspy A.F."/>
            <person name="Carson M."/>
            <person name="Gipson J."/>
            <person name="Gipson M."/>
            <person name="Bruce D."/>
            <person name="Detter J.C."/>
            <person name="Han C.S."/>
            <person name="Land M."/>
            <person name="Tapia R."/>
            <person name="Thompson L.S."/>
            <person name="Orvis J."/>
            <person name="Zaitshik J."/>
            <person name="Barnes G."/>
            <person name="Brettin T.S."/>
            <person name="Dyer D.W."/>
            <person name="Inzana T.J."/>
        </authorList>
    </citation>
    <scope>NUCLEOTIDE SEQUENCE [LARGE SCALE GENOMIC DNA]</scope>
    <source>
        <strain>2336</strain>
    </source>
</reference>
<organism>
    <name type="scientific">Histophilus somni (strain 2336)</name>
    <name type="common">Haemophilus somnus</name>
    <dbReference type="NCBI Taxonomy" id="228400"/>
    <lineage>
        <taxon>Bacteria</taxon>
        <taxon>Pseudomonadati</taxon>
        <taxon>Pseudomonadota</taxon>
        <taxon>Gammaproteobacteria</taxon>
        <taxon>Pasteurellales</taxon>
        <taxon>Pasteurellaceae</taxon>
        <taxon>Histophilus</taxon>
    </lineage>
</organism>
<sequence>MSVIPMVVEQTSRGERSYDIYSRLLKERVIFLTGEVEDRMANLIVAQLLFLEAEDPAKDINIYINSPGGSVTAGMAIYDTMQFIKPNVRTLCIGQACSMGAFLLAGGTAGKRAALPHARVMIHQPLGGFRGQASDIQIHAQEILKIKQTLNERLAFHTGQSIEQIEQDTDRDNFMSAEQAKLYGLVDDVLIKR</sequence>
<proteinExistence type="inferred from homology"/>
<accession>B0UW20</accession>